<proteinExistence type="evidence at transcript level"/>
<evidence type="ECO:0000250" key="1"/>
<evidence type="ECO:0000255" key="2"/>
<evidence type="ECO:0000256" key="3">
    <source>
        <dbReference type="SAM" id="MobiDB-lite"/>
    </source>
</evidence>
<evidence type="ECO:0000269" key="4">
    <source>
    </source>
</evidence>
<evidence type="ECO:0000269" key="5">
    <source>
    </source>
</evidence>
<keyword id="KW-0966">Cell projection</keyword>
<keyword id="KW-0969">Cilium</keyword>
<keyword id="KW-0175">Coiled coil</keyword>
<keyword id="KW-1185">Reference proteome</keyword>
<keyword id="KW-0677">Repeat</keyword>
<keyword id="KW-0802">TPR repeat</keyword>
<keyword id="KW-0879">Wnt signaling pathway</keyword>
<accession>Q6AZT7</accession>
<reference key="1">
    <citation type="submission" date="2004-07" db="EMBL/GenBank/DDBJ databases">
        <authorList>
            <consortium name="NIH - Xenopus Gene Collection (XGC) project"/>
        </authorList>
    </citation>
    <scope>NUCLEOTIDE SEQUENCE [LARGE SCALE MRNA]</scope>
    <source>
        <tissue>Ovary</tissue>
    </source>
</reference>
<reference key="2">
    <citation type="journal article" date="2008" name="Am. J. Hum. Genet.">
        <title>Loss of nephrocystin-3 function can cause embryonic lethality, Meckel-Gruber-like syndrome, situs inversus, and renal-hepatic-pancreatic dysplasia.</title>
        <authorList>
            <person name="Bergmann C."/>
            <person name="Fliegauf M."/>
            <person name="Bruechle N.O."/>
            <person name="Frank V."/>
            <person name="Olbrich H."/>
            <person name="Kirschner J."/>
            <person name="Schermer B."/>
            <person name="Schmedding I."/>
            <person name="Kispert A."/>
            <person name="Kraenzlin B."/>
            <person name="Nuernberg G."/>
            <person name="Becker C."/>
            <person name="Grimm T."/>
            <person name="Girschick G."/>
            <person name="Lynch S.A."/>
            <person name="Kelehan P."/>
            <person name="Senderek J."/>
            <person name="Neuhaus T.J."/>
            <person name="Stallmach T."/>
            <person name="Zentgraf H."/>
            <person name="Nuernberg P."/>
            <person name="Gretz N."/>
            <person name="Lo C."/>
            <person name="Lienkamp S."/>
            <person name="Schaefer T."/>
            <person name="Walz G."/>
            <person name="Benzing T."/>
            <person name="Zerres K."/>
            <person name="Omran H."/>
        </authorList>
    </citation>
    <scope>FUNCTION</scope>
</reference>
<reference key="3">
    <citation type="journal article" date="2013" name="Nat. Genet.">
        <title>ANKS6 is a central component of a nephronophthisis module linking NEK8 to INVS and NPHP3.</title>
        <authorList>
            <person name="Hoff S."/>
            <person name="Halbritter J."/>
            <person name="Epting D."/>
            <person name="Frank V."/>
            <person name="Nguyen T.M."/>
            <person name="van Reeuwijk J."/>
            <person name="Boehlke C."/>
            <person name="Schell C."/>
            <person name="Yasunaga T."/>
            <person name="Helmstadter M."/>
            <person name="Mergen M."/>
            <person name="Filhol E."/>
            <person name="Boldt K."/>
            <person name="Horn N."/>
            <person name="Ueffing M."/>
            <person name="Otto E.A."/>
            <person name="Eisenberger T."/>
            <person name="Elting M.W."/>
            <person name="van Wijk J.A."/>
            <person name="Bockenhauer D."/>
            <person name="Sebire N.J."/>
            <person name="Rittig S."/>
            <person name="Vyberg M."/>
            <person name="Ring T."/>
            <person name="Pohl M."/>
            <person name="Pape L."/>
            <person name="Neuhaus T.J."/>
            <person name="Elshakhs N.A."/>
            <person name="Koon S.J."/>
            <person name="Harris P.C."/>
            <person name="Grahammer F."/>
            <person name="Huber T.B."/>
            <person name="Kuehn E.W."/>
            <person name="Kramer-Zucker A."/>
            <person name="Bolz H.J."/>
            <person name="Roepman R."/>
            <person name="Saunier S."/>
            <person name="Walz G."/>
            <person name="Hildebrandt F."/>
            <person name="Bergmann C."/>
            <person name="Lienkamp S.S."/>
        </authorList>
    </citation>
    <scope>DISRUPTION PHENOTYPE</scope>
</reference>
<organism>
    <name type="scientific">Xenopus laevis</name>
    <name type="common">African clawed frog</name>
    <dbReference type="NCBI Taxonomy" id="8355"/>
    <lineage>
        <taxon>Eukaryota</taxon>
        <taxon>Metazoa</taxon>
        <taxon>Chordata</taxon>
        <taxon>Craniata</taxon>
        <taxon>Vertebrata</taxon>
        <taxon>Euteleostomi</taxon>
        <taxon>Amphibia</taxon>
        <taxon>Batrachia</taxon>
        <taxon>Anura</taxon>
        <taxon>Pipoidea</taxon>
        <taxon>Pipidae</taxon>
        <taxon>Xenopodinae</taxon>
        <taxon>Xenopus</taxon>
        <taxon>Xenopus</taxon>
    </lineage>
</organism>
<comment type="function">
    <text evidence="4">Required for normal ciliary development and function. Inhibits disheveled-1-induced canonical Wnt-signaling activity and may also play a role in the control of non-canonical Wnt signaling that regulates planar cell polarity. Probably acts as a molecular switch between different Wnt signaling pathways. Required for proper convergent extension cell movements.</text>
</comment>
<comment type="subcellular location">
    <subcellularLocation>
        <location evidence="1">Cell projection</location>
        <location evidence="1">Cilium</location>
    </subcellularLocation>
</comment>
<comment type="disruption phenotype">
    <text evidence="5">Bilateral morpholino knockdown of the protein in the embryo causes gross body edema that is typical of a renal excretory defect.</text>
</comment>
<protein>
    <recommendedName>
        <fullName>Nephrocystin-3</fullName>
    </recommendedName>
</protein>
<name>NPHP3_XENLA</name>
<sequence length="1300" mass="148319">MGTASSLVNAGEVIEDTYGGGGGEDCVIPVEVKPKARLLRSSFRRGPRVIGASFKSTASVDLEYAAEYERLKKEYEIFRVSKNNEVASMQKKEIKLDEENKRLRAELQALQKTYQKILREKESAVEAKYQAMERAATFEHDRDKVKRQFKIFRETKEKEIQDLLRAKRDLEAKLQRLQAQGIQVFDPGESDSDDNGTEVTVPSTQCEYWTSGALGSDPSMGSMMQLQQSFRGPEFAHSSIDVEGPFANVNRDDWDAAVASLLQVTPLFSQSLWSNTVRCYLMSTAETQAEVEIFLRDYSPKLQRMCETSGYFFQMVFFPEECESQHFAVRKWEIEKSSIVILFICSSLPSCLQEDCEEAFLKNNEAKPRLIYHSIEDGRSDSDGLKQLLEQDTNKANKTKVVDHCGDPVEGAYKLYCHLEQVIKQDLLGIEISDPDAKDESATMEDDDYGDVLWDVHDEQEQMEAYQQASQSICELGFQKYYDRLNDLVAAPAPIPPLLISGGPGSGKSLLLSKWIQLQQKHSPNTLMLYHFVGRPLSSSSEPSLIIKRLTLKLMQHSWSVSSLSMDPGKFLEEFPHWLEKLSIRYQGNIIIIIDSIDHIQQSEKHMKWLIDPLPVNVRVIVSVNVETCPQAWRLWPTLHLDPLNSKDVKALINMECGGANILLTKEQERKLERHCRSATTCNALYVTLITKLLTWAGSTGKIEDVLQQCLQCQDTVSLYRLVLRSVQEVMPSAKEKEFMREILCFISVSHNGVSECELMELCPGLTWEVLTSLIYHLYTLVLLKYTCGLLQFQHLQAWDAVNLEYMQGGQNIISEYREKIIKHFTTQLSHDRVTWRSADELTWLFQQQGEKQKLHKCLMNLFVSQNLYKRGHFAELLSYWQLVGKDKISMASEYFDALKQYEKNCEGEEKMTSLADLYETLGRFLKDLGLLSQAVTPLQRSLEIRETALDPDHPSVAQSLHQLAGVYMQSKKFGNAEQLYKQALEISENAYGSEHLRVARELDALAVLYQKQNKFEQAEQLRKKSLKIRQKSARRKGSMYGFALLRRRALQLEELTLGKDTSDNARTLNELGVLYYLQNNLETAETFLKRSLEMRERVLGADHPDCAQSINNLAALYNEKKQYDKAEELYERALDIRRRALSPDHPSLAYTVKHLAVLYKRKGKLDKAVPLYELAVDIRQKSFGPKHPSVATALVNLAVLYCQMKKQDDALPLYERAMKIYEDSLGRMHPRVGETLKNLAVLRYEEGDYEKAAELYKRAMEIKETETSVLGAKAPSGHSSSGGDTYSVQNTLPVSVFPE</sequence>
<feature type="chain" id="PRO_0000106303" description="Nephrocystin-3">
    <location>
        <begin position="1"/>
        <end position="1300"/>
    </location>
</feature>
<feature type="repeat" description="TPR 1">
    <location>
        <begin position="443"/>
        <end position="476"/>
    </location>
</feature>
<feature type="repeat" description="TPR 2">
    <location>
        <begin position="916"/>
        <end position="949"/>
    </location>
</feature>
<feature type="repeat" description="TPR 3">
    <location>
        <begin position="958"/>
        <end position="991"/>
    </location>
</feature>
<feature type="repeat" description="TPR 4">
    <location>
        <begin position="1000"/>
        <end position="1033"/>
    </location>
</feature>
<feature type="repeat" description="TPR 5">
    <location>
        <begin position="1066"/>
        <end position="1099"/>
    </location>
</feature>
<feature type="repeat" description="TPR 6">
    <location>
        <begin position="1108"/>
        <end position="1141"/>
    </location>
</feature>
<feature type="repeat" description="TPR 7">
    <location>
        <begin position="1150"/>
        <end position="1183"/>
    </location>
</feature>
<feature type="repeat" description="TPR 8">
    <location>
        <begin position="1192"/>
        <end position="1225"/>
    </location>
</feature>
<feature type="repeat" description="TPR 9">
    <location>
        <begin position="1234"/>
        <end position="1267"/>
    </location>
</feature>
<feature type="region of interest" description="Disordered" evidence="3">
    <location>
        <begin position="1268"/>
        <end position="1288"/>
    </location>
</feature>
<feature type="coiled-coil region" evidence="2">
    <location>
        <begin position="82"/>
        <end position="183"/>
    </location>
</feature>
<feature type="compositionally biased region" description="Polar residues" evidence="3">
    <location>
        <begin position="1278"/>
        <end position="1288"/>
    </location>
</feature>
<gene>
    <name type="primary">nphp3</name>
</gene>
<dbReference type="EMBL" id="BC077320">
    <property type="protein sequence ID" value="AAH77320.1"/>
    <property type="molecule type" value="mRNA"/>
</dbReference>
<dbReference type="RefSeq" id="NP_001086695.1">
    <property type="nucleotide sequence ID" value="NM_001093226.1"/>
</dbReference>
<dbReference type="SMR" id="Q6AZT7"/>
<dbReference type="DNASU" id="446530"/>
<dbReference type="GeneID" id="446530"/>
<dbReference type="KEGG" id="xla:446530"/>
<dbReference type="AGR" id="Xenbase:XB-GENE-865745"/>
<dbReference type="CTD" id="446530"/>
<dbReference type="Xenbase" id="XB-GENE-865745">
    <property type="gene designation" value="nphp3.L"/>
</dbReference>
<dbReference type="OrthoDB" id="626167at2759"/>
<dbReference type="Proteomes" id="UP000186698">
    <property type="component" value="Chromosome 6L"/>
</dbReference>
<dbReference type="Bgee" id="446530">
    <property type="expression patterns" value="Expressed in pancreas and 19 other cell types or tissues"/>
</dbReference>
<dbReference type="GO" id="GO:0097546">
    <property type="term" value="C:ciliary base"/>
    <property type="evidence" value="ECO:0000318"/>
    <property type="project" value="GO_Central"/>
</dbReference>
<dbReference type="GO" id="GO:0097543">
    <property type="term" value="C:ciliary inversin compartment"/>
    <property type="evidence" value="ECO:0000318"/>
    <property type="project" value="GO_Central"/>
</dbReference>
<dbReference type="GO" id="GO:0005929">
    <property type="term" value="C:cilium"/>
    <property type="evidence" value="ECO:0000250"/>
    <property type="project" value="UniProtKB"/>
</dbReference>
<dbReference type="GO" id="GO:0060271">
    <property type="term" value="P:cilium assembly"/>
    <property type="evidence" value="ECO:0000250"/>
    <property type="project" value="UniProtKB"/>
</dbReference>
<dbReference type="GO" id="GO:0060026">
    <property type="term" value="P:convergent extension"/>
    <property type="evidence" value="ECO:0000318"/>
    <property type="project" value="GO_Central"/>
</dbReference>
<dbReference type="GO" id="GO:0060027">
    <property type="term" value="P:convergent extension involved in gastrulation"/>
    <property type="evidence" value="ECO:0000315"/>
    <property type="project" value="BHF-UCL"/>
</dbReference>
<dbReference type="GO" id="GO:0007368">
    <property type="term" value="P:determination of left/right symmetry"/>
    <property type="evidence" value="ECO:0000318"/>
    <property type="project" value="GO_Central"/>
</dbReference>
<dbReference type="GO" id="GO:0001822">
    <property type="term" value="P:kidney development"/>
    <property type="evidence" value="ECO:0000318"/>
    <property type="project" value="GO_Central"/>
</dbReference>
<dbReference type="GO" id="GO:0090090">
    <property type="term" value="P:negative regulation of canonical Wnt signaling pathway"/>
    <property type="evidence" value="ECO:0000250"/>
    <property type="project" value="UniProtKB"/>
</dbReference>
<dbReference type="GO" id="GO:2000095">
    <property type="term" value="P:regulation of Wnt signaling pathway, planar cell polarity pathway"/>
    <property type="evidence" value="ECO:0000315"/>
    <property type="project" value="UniProtKB"/>
</dbReference>
<dbReference type="GO" id="GO:0016055">
    <property type="term" value="P:Wnt signaling pathway"/>
    <property type="evidence" value="ECO:0007669"/>
    <property type="project" value="UniProtKB-KW"/>
</dbReference>
<dbReference type="FunFam" id="1.25.40.10:FF:000150">
    <property type="entry name" value="Nephrocystin-3"/>
    <property type="match status" value="1"/>
</dbReference>
<dbReference type="FunFam" id="1.25.40.10:FF:000362">
    <property type="entry name" value="Nephrocystin-3"/>
    <property type="match status" value="1"/>
</dbReference>
<dbReference type="FunFam" id="3.40.50.300:FF:000693">
    <property type="entry name" value="Nephrocystin-3"/>
    <property type="match status" value="1"/>
</dbReference>
<dbReference type="FunFam" id="1.25.40.10:FF:000301">
    <property type="entry name" value="Nephronophthisis 3"/>
    <property type="match status" value="1"/>
</dbReference>
<dbReference type="Gene3D" id="3.40.50.300">
    <property type="entry name" value="P-loop containing nucleotide triphosphate hydrolases"/>
    <property type="match status" value="1"/>
</dbReference>
<dbReference type="Gene3D" id="1.25.40.10">
    <property type="entry name" value="Tetratricopeptide repeat domain"/>
    <property type="match status" value="3"/>
</dbReference>
<dbReference type="InterPro" id="IPR056884">
    <property type="entry name" value="NPHP3-like_N"/>
</dbReference>
<dbReference type="InterPro" id="IPR056886">
    <property type="entry name" value="NPHP3_ab_dom"/>
</dbReference>
<dbReference type="InterPro" id="IPR056883">
    <property type="entry name" value="NPHP3_hel"/>
</dbReference>
<dbReference type="InterPro" id="IPR027417">
    <property type="entry name" value="P-loop_NTPase"/>
</dbReference>
<dbReference type="InterPro" id="IPR011990">
    <property type="entry name" value="TPR-like_helical_dom_sf"/>
</dbReference>
<dbReference type="InterPro" id="IPR056885">
    <property type="entry name" value="TPR_NPHP3"/>
</dbReference>
<dbReference type="InterPro" id="IPR019734">
    <property type="entry name" value="TPR_rpt"/>
</dbReference>
<dbReference type="PANTHER" id="PTHR45641:SF19">
    <property type="entry name" value="NEPHROCYSTIN-3"/>
    <property type="match status" value="1"/>
</dbReference>
<dbReference type="PANTHER" id="PTHR45641">
    <property type="entry name" value="TETRATRICOPEPTIDE REPEAT PROTEIN (AFU_ORTHOLOGUE AFUA_6G03870)"/>
    <property type="match status" value="1"/>
</dbReference>
<dbReference type="Pfam" id="PF25022">
    <property type="entry name" value="NPHP3"/>
    <property type="match status" value="1"/>
</dbReference>
<dbReference type="Pfam" id="PF24884">
    <property type="entry name" value="NPHP3_hel"/>
    <property type="match status" value="1"/>
</dbReference>
<dbReference type="Pfam" id="PF24883">
    <property type="entry name" value="NPHP3_N"/>
    <property type="match status" value="1"/>
</dbReference>
<dbReference type="Pfam" id="PF13424">
    <property type="entry name" value="TPR_12"/>
    <property type="match status" value="2"/>
</dbReference>
<dbReference type="Pfam" id="PF13176">
    <property type="entry name" value="TPR_7"/>
    <property type="match status" value="1"/>
</dbReference>
<dbReference type="Pfam" id="PF24885">
    <property type="entry name" value="TPR_NPHP3"/>
    <property type="match status" value="1"/>
</dbReference>
<dbReference type="SMART" id="SM00028">
    <property type="entry name" value="TPR"/>
    <property type="match status" value="8"/>
</dbReference>
<dbReference type="SUPFAM" id="SSF52540">
    <property type="entry name" value="P-loop containing nucleoside triphosphate hydrolases"/>
    <property type="match status" value="1"/>
</dbReference>
<dbReference type="SUPFAM" id="SSF48452">
    <property type="entry name" value="TPR-like"/>
    <property type="match status" value="2"/>
</dbReference>
<dbReference type="PROSITE" id="PS50005">
    <property type="entry name" value="TPR"/>
    <property type="match status" value="8"/>
</dbReference>
<dbReference type="PROSITE" id="PS50293">
    <property type="entry name" value="TPR_REGION"/>
    <property type="match status" value="1"/>
</dbReference>